<protein>
    <recommendedName>
        <fullName evidence="1">Glucose-6-phosphate isomerase</fullName>
        <shortName evidence="1">GPI</shortName>
        <ecNumber evidence="1">5.3.1.9</ecNumber>
    </recommendedName>
    <alternativeName>
        <fullName evidence="1">Phosphoglucose isomerase</fullName>
        <shortName evidence="1">PGI</shortName>
    </alternativeName>
    <alternativeName>
        <fullName evidence="1">Phosphohexose isomerase</fullName>
        <shortName evidence="1">PHI</shortName>
    </alternativeName>
</protein>
<feature type="chain" id="PRO_0000180759" description="Glucose-6-phosphate isomerase">
    <location>
        <begin position="1"/>
        <end position="415"/>
    </location>
</feature>
<feature type="active site" description="Proton donor" evidence="1">
    <location>
        <position position="267"/>
    </location>
</feature>
<feature type="active site" evidence="1">
    <location>
        <position position="293"/>
    </location>
</feature>
<feature type="active site" evidence="1">
    <location>
        <position position="406"/>
    </location>
</feature>
<feature type="strand" evidence="2">
    <location>
        <begin position="3"/>
        <end position="5"/>
    </location>
</feature>
<feature type="helix" evidence="2">
    <location>
        <begin position="12"/>
        <end position="18"/>
    </location>
</feature>
<feature type="helix" evidence="2">
    <location>
        <begin position="20"/>
        <end position="32"/>
    </location>
</feature>
<feature type="strand" evidence="2">
    <location>
        <begin position="34"/>
        <end position="36"/>
    </location>
</feature>
<feature type="helix" evidence="2">
    <location>
        <begin position="42"/>
        <end position="44"/>
    </location>
</feature>
<feature type="helix" evidence="2">
    <location>
        <begin position="46"/>
        <end position="48"/>
    </location>
</feature>
<feature type="helix" evidence="2">
    <location>
        <begin position="52"/>
        <end position="61"/>
    </location>
</feature>
<feature type="strand" evidence="2">
    <location>
        <begin position="67"/>
        <end position="72"/>
    </location>
</feature>
<feature type="helix" evidence="2">
    <location>
        <begin position="75"/>
        <end position="77"/>
    </location>
</feature>
<feature type="helix" evidence="2">
    <location>
        <begin position="79"/>
        <end position="88"/>
    </location>
</feature>
<feature type="strand" evidence="2">
    <location>
        <begin position="94"/>
        <end position="98"/>
    </location>
</feature>
<feature type="helix" evidence="2">
    <location>
        <begin position="103"/>
        <end position="112"/>
    </location>
</feature>
<feature type="helix" evidence="2">
    <location>
        <begin position="115"/>
        <end position="117"/>
    </location>
</feature>
<feature type="strand" evidence="2">
    <location>
        <begin position="118"/>
        <end position="127"/>
    </location>
</feature>
<feature type="helix" evidence="2">
    <location>
        <begin position="130"/>
        <end position="147"/>
    </location>
</feature>
<feature type="helix" evidence="2">
    <location>
        <begin position="148"/>
        <end position="154"/>
    </location>
</feature>
<feature type="strand" evidence="2">
    <location>
        <begin position="155"/>
        <end position="159"/>
    </location>
</feature>
<feature type="strand" evidence="2">
    <location>
        <begin position="161"/>
        <end position="164"/>
    </location>
</feature>
<feature type="helix" evidence="2">
    <location>
        <begin position="165"/>
        <end position="173"/>
    </location>
</feature>
<feature type="strand" evidence="2">
    <location>
        <begin position="176"/>
        <end position="179"/>
    </location>
</feature>
<feature type="helix" evidence="2">
    <location>
        <begin position="186"/>
        <end position="188"/>
    </location>
</feature>
<feature type="helix" evidence="2">
    <location>
        <begin position="193"/>
        <end position="201"/>
    </location>
</feature>
<feature type="helix" evidence="2">
    <location>
        <begin position="206"/>
        <end position="221"/>
    </location>
</feature>
<feature type="helix" evidence="2">
    <location>
        <begin position="224"/>
        <end position="226"/>
    </location>
</feature>
<feature type="helix" evidence="2">
    <location>
        <begin position="228"/>
        <end position="238"/>
    </location>
</feature>
<feature type="turn" evidence="2">
    <location>
        <begin position="239"/>
        <end position="241"/>
    </location>
</feature>
<feature type="strand" evidence="2">
    <location>
        <begin position="242"/>
        <end position="249"/>
    </location>
</feature>
<feature type="turn" evidence="2">
    <location>
        <begin position="253"/>
        <end position="256"/>
    </location>
</feature>
<feature type="helix" evidence="2">
    <location>
        <begin position="257"/>
        <end position="269"/>
    </location>
</feature>
<feature type="strand" evidence="2">
    <location>
        <begin position="270"/>
        <end position="272"/>
    </location>
</feature>
<feature type="strand" evidence="2">
    <location>
        <begin position="282"/>
        <end position="287"/>
    </location>
</feature>
<feature type="helix" evidence="2">
    <location>
        <begin position="290"/>
        <end position="292"/>
    </location>
</feature>
<feature type="turn" evidence="2">
    <location>
        <begin position="293"/>
        <end position="295"/>
    </location>
</feature>
<feature type="helix" evidence="2">
    <location>
        <begin position="296"/>
        <end position="301"/>
    </location>
</feature>
<feature type="strand" evidence="2">
    <location>
        <begin position="306"/>
        <end position="314"/>
    </location>
</feature>
<feature type="helix" evidence="2">
    <location>
        <begin position="329"/>
        <end position="331"/>
    </location>
</feature>
<feature type="turn" evidence="2">
    <location>
        <begin position="332"/>
        <end position="336"/>
    </location>
</feature>
<feature type="helix" evidence="2">
    <location>
        <begin position="339"/>
        <end position="356"/>
    </location>
</feature>
<feature type="strand" evidence="2">
    <location>
        <begin position="360"/>
        <end position="370"/>
    </location>
</feature>
<feature type="helix" evidence="2">
    <location>
        <begin position="371"/>
        <end position="391"/>
    </location>
</feature>
<feature type="helix" evidence="2">
    <location>
        <begin position="400"/>
        <end position="402"/>
    </location>
</feature>
<feature type="helix" evidence="2">
    <location>
        <begin position="403"/>
        <end position="414"/>
    </location>
</feature>
<organism>
    <name type="scientific">Thermus thermophilus (strain ATCC 27634 / DSM 579 / HB8)</name>
    <dbReference type="NCBI Taxonomy" id="300852"/>
    <lineage>
        <taxon>Bacteria</taxon>
        <taxon>Thermotogati</taxon>
        <taxon>Deinococcota</taxon>
        <taxon>Deinococci</taxon>
        <taxon>Thermales</taxon>
        <taxon>Thermaceae</taxon>
        <taxon>Thermus</taxon>
    </lineage>
</organism>
<proteinExistence type="evidence at protein level"/>
<evidence type="ECO:0000255" key="1">
    <source>
        <dbReference type="HAMAP-Rule" id="MF_00473"/>
    </source>
</evidence>
<evidence type="ECO:0007829" key="2">
    <source>
        <dbReference type="PDB" id="1ZZG"/>
    </source>
</evidence>
<reference key="1">
    <citation type="submission" date="2004-11" db="EMBL/GenBank/DDBJ databases">
        <title>Complete genome sequence of Thermus thermophilus HB8.</title>
        <authorList>
            <person name="Masui R."/>
            <person name="Kurokawa K."/>
            <person name="Nakagawa N."/>
            <person name="Tokunaga F."/>
            <person name="Koyama Y."/>
            <person name="Shibata T."/>
            <person name="Oshima T."/>
            <person name="Yokoyama S."/>
            <person name="Yasunaga T."/>
            <person name="Kuramitsu S."/>
        </authorList>
    </citation>
    <scope>NUCLEOTIDE SEQUENCE [LARGE SCALE GENOMIC DNA]</scope>
    <source>
        <strain>ATCC 27634 / DSM 579 / HB8</strain>
    </source>
</reference>
<reference key="2">
    <citation type="submission" date="2006-06" db="PDB data bank">
        <title>Crystal structure of hypothetical protein TT0277 from Thermus thermophilus HB8.</title>
        <authorList>
            <consortium name="RIKEN structural genomics initiative (RSGI)"/>
        </authorList>
    </citation>
    <scope>X-RAY CRYSTALLOGRAPHY (1.95 ANGSTROMS)</scope>
</reference>
<dbReference type="EC" id="5.3.1.9" evidence="1"/>
<dbReference type="EMBL" id="AP008226">
    <property type="protein sequence ID" value="BAD70100.1"/>
    <property type="molecule type" value="Genomic_DNA"/>
</dbReference>
<dbReference type="RefSeq" id="WP_011227825.1">
    <property type="nucleotide sequence ID" value="NC_006461.1"/>
</dbReference>
<dbReference type="RefSeq" id="YP_143543.1">
    <property type="nucleotide sequence ID" value="NC_006461.1"/>
</dbReference>
<dbReference type="PDB" id="1ZZG">
    <property type="method" value="X-ray"/>
    <property type="resolution" value="1.95 A"/>
    <property type="chains" value="A/B=1-415"/>
</dbReference>
<dbReference type="PDBsum" id="1ZZG"/>
<dbReference type="SMR" id="Q5SLL6"/>
<dbReference type="EnsemblBacteria" id="BAD70100">
    <property type="protein sequence ID" value="BAD70100"/>
    <property type="gene ID" value="BAD70100"/>
</dbReference>
<dbReference type="GeneID" id="3168044"/>
<dbReference type="KEGG" id="ttj:TTHA0277"/>
<dbReference type="PATRIC" id="fig|300852.9.peg.277"/>
<dbReference type="eggNOG" id="COG0166">
    <property type="taxonomic scope" value="Bacteria"/>
</dbReference>
<dbReference type="HOGENOM" id="CLU_037303_1_0_0"/>
<dbReference type="PhylomeDB" id="Q5SLL6"/>
<dbReference type="UniPathway" id="UPA00109">
    <property type="reaction ID" value="UER00181"/>
</dbReference>
<dbReference type="UniPathway" id="UPA00138"/>
<dbReference type="EvolutionaryTrace" id="Q5SLL6"/>
<dbReference type="Proteomes" id="UP000000532">
    <property type="component" value="Chromosome"/>
</dbReference>
<dbReference type="GO" id="GO:0005829">
    <property type="term" value="C:cytosol"/>
    <property type="evidence" value="ECO:0007669"/>
    <property type="project" value="TreeGrafter"/>
</dbReference>
<dbReference type="GO" id="GO:0097367">
    <property type="term" value="F:carbohydrate derivative binding"/>
    <property type="evidence" value="ECO:0007669"/>
    <property type="project" value="InterPro"/>
</dbReference>
<dbReference type="GO" id="GO:0004347">
    <property type="term" value="F:glucose-6-phosphate isomerase activity"/>
    <property type="evidence" value="ECO:0007669"/>
    <property type="project" value="UniProtKB-UniRule"/>
</dbReference>
<dbReference type="GO" id="GO:0048029">
    <property type="term" value="F:monosaccharide binding"/>
    <property type="evidence" value="ECO:0007669"/>
    <property type="project" value="TreeGrafter"/>
</dbReference>
<dbReference type="GO" id="GO:0006094">
    <property type="term" value="P:gluconeogenesis"/>
    <property type="evidence" value="ECO:0007669"/>
    <property type="project" value="UniProtKB-UniRule"/>
</dbReference>
<dbReference type="GO" id="GO:0051156">
    <property type="term" value="P:glucose 6-phosphate metabolic process"/>
    <property type="evidence" value="ECO:0007669"/>
    <property type="project" value="TreeGrafter"/>
</dbReference>
<dbReference type="GO" id="GO:0006096">
    <property type="term" value="P:glycolytic process"/>
    <property type="evidence" value="ECO:0007669"/>
    <property type="project" value="UniProtKB-UniRule"/>
</dbReference>
<dbReference type="CDD" id="cd05015">
    <property type="entry name" value="SIS_PGI_1"/>
    <property type="match status" value="1"/>
</dbReference>
<dbReference type="CDD" id="cd05016">
    <property type="entry name" value="SIS_PGI_2"/>
    <property type="match status" value="1"/>
</dbReference>
<dbReference type="Gene3D" id="3.40.50.10490">
    <property type="entry name" value="Glucose-6-phosphate isomerase like protein, domain 1"/>
    <property type="match status" value="2"/>
</dbReference>
<dbReference type="HAMAP" id="MF_00473">
    <property type="entry name" value="G6P_isomerase"/>
    <property type="match status" value="1"/>
</dbReference>
<dbReference type="InterPro" id="IPR001672">
    <property type="entry name" value="G6P_Isomerase"/>
</dbReference>
<dbReference type="InterPro" id="IPR018189">
    <property type="entry name" value="Phosphoglucose_isomerase_CS"/>
</dbReference>
<dbReference type="InterPro" id="IPR046348">
    <property type="entry name" value="SIS_dom_sf"/>
</dbReference>
<dbReference type="InterPro" id="IPR035476">
    <property type="entry name" value="SIS_PGI_1"/>
</dbReference>
<dbReference type="InterPro" id="IPR035482">
    <property type="entry name" value="SIS_PGI_2"/>
</dbReference>
<dbReference type="PANTHER" id="PTHR11469">
    <property type="entry name" value="GLUCOSE-6-PHOSPHATE ISOMERASE"/>
    <property type="match status" value="1"/>
</dbReference>
<dbReference type="PANTHER" id="PTHR11469:SF1">
    <property type="entry name" value="GLUCOSE-6-PHOSPHATE ISOMERASE"/>
    <property type="match status" value="1"/>
</dbReference>
<dbReference type="Pfam" id="PF00342">
    <property type="entry name" value="PGI"/>
    <property type="match status" value="1"/>
</dbReference>
<dbReference type="PRINTS" id="PR00662">
    <property type="entry name" value="G6PISOMERASE"/>
</dbReference>
<dbReference type="SUPFAM" id="SSF53697">
    <property type="entry name" value="SIS domain"/>
    <property type="match status" value="1"/>
</dbReference>
<dbReference type="PROSITE" id="PS00174">
    <property type="entry name" value="P_GLUCOSE_ISOMERASE_2"/>
    <property type="match status" value="1"/>
</dbReference>
<dbReference type="PROSITE" id="PS51463">
    <property type="entry name" value="P_GLUCOSE_ISOMERASE_3"/>
    <property type="match status" value="1"/>
</dbReference>
<comment type="function">
    <text evidence="1">Catalyzes the reversible isomerization of glucose-6-phosphate to fructose-6-phosphate.</text>
</comment>
<comment type="catalytic activity">
    <reaction evidence="1">
        <text>alpha-D-glucose 6-phosphate = beta-D-fructose 6-phosphate</text>
        <dbReference type="Rhea" id="RHEA:11816"/>
        <dbReference type="ChEBI" id="CHEBI:57634"/>
        <dbReference type="ChEBI" id="CHEBI:58225"/>
        <dbReference type="EC" id="5.3.1.9"/>
    </reaction>
</comment>
<comment type="pathway">
    <text evidence="1">Carbohydrate biosynthesis; gluconeogenesis.</text>
</comment>
<comment type="pathway">
    <text evidence="1">Carbohydrate degradation; glycolysis; D-glyceraldehyde 3-phosphate and glycerone phosphate from D-glucose: step 2/4.</text>
</comment>
<comment type="subcellular location">
    <subcellularLocation>
        <location evidence="1">Cytoplasm</location>
    </subcellularLocation>
</comment>
<comment type="similarity">
    <text evidence="1">Belongs to the GPI family.</text>
</comment>
<name>G6PI_THET8</name>
<gene>
    <name evidence="1" type="primary">pgi</name>
    <name type="ordered locus">TTHA0277</name>
</gene>
<keyword id="KW-0002">3D-structure</keyword>
<keyword id="KW-0963">Cytoplasm</keyword>
<keyword id="KW-0312">Gluconeogenesis</keyword>
<keyword id="KW-0324">Glycolysis</keyword>
<keyword id="KW-0413">Isomerase</keyword>
<keyword id="KW-1185">Reference proteome</keyword>
<sequence length="415" mass="46081">MLRLDTRFLPGFPEALSRHGPLLEEARRRLLAKRGEPGSMLGWMDLPEDTETLREVRRYREANPWVEDFVLIGIGGSALGPKALEAAFNESGVRFHYLDHVEPEPILRLLRTLDPRKTLVNAVSKSGSTAETLAGLAVFLKWLKAHLGEDWRRHLVVTTDPKEGPLRAFAEREGLKAFAIPKEVGGRFSALSPVGLLPLAFAGADLDALLMGARKANETALAPLEESLPLKTALLLHLHRHLPVHVFMVYSERLSHLPSWFVQLHDESLGKVDRQGQRVGTTAVPALGPKDQHAQVQLFREGPLDKLLALVIPEAPLEDVEIPEVEGLEAASYLFGKTLFQLLKAEAEATYEALAEAGQRVYALFLPEVSPYAVGWLMQHLMWQTAFLGELWEVNAFDQPGVELGKVLTRKRLAG</sequence>
<accession>Q5SLL6</accession>